<reference key="1">
    <citation type="submission" date="2008-01" db="EMBL/GenBank/DDBJ databases">
        <title>Complete sequence of Pseudomonas putida GB-1.</title>
        <authorList>
            <consortium name="US DOE Joint Genome Institute"/>
            <person name="Copeland A."/>
            <person name="Lucas S."/>
            <person name="Lapidus A."/>
            <person name="Barry K."/>
            <person name="Glavina del Rio T."/>
            <person name="Dalin E."/>
            <person name="Tice H."/>
            <person name="Pitluck S."/>
            <person name="Bruce D."/>
            <person name="Goodwin L."/>
            <person name="Chertkov O."/>
            <person name="Brettin T."/>
            <person name="Detter J.C."/>
            <person name="Han C."/>
            <person name="Kuske C.R."/>
            <person name="Schmutz J."/>
            <person name="Larimer F."/>
            <person name="Land M."/>
            <person name="Hauser L."/>
            <person name="Kyrpides N."/>
            <person name="Kim E."/>
            <person name="McCarthy J.K."/>
            <person name="Richardson P."/>
        </authorList>
    </citation>
    <scope>NUCLEOTIDE SEQUENCE [LARGE SCALE GENOMIC DNA]</scope>
    <source>
        <strain>GB-1</strain>
    </source>
</reference>
<comment type="catalytic activity">
    <reaction evidence="1">
        <text>5-amino-1-(5-phospho-D-ribosyl)imidazole-4-carboxylate + L-aspartate + ATP = (2S)-2-[5-amino-1-(5-phospho-beta-D-ribosyl)imidazole-4-carboxamido]succinate + ADP + phosphate + 2 H(+)</text>
        <dbReference type="Rhea" id="RHEA:22628"/>
        <dbReference type="ChEBI" id="CHEBI:15378"/>
        <dbReference type="ChEBI" id="CHEBI:29991"/>
        <dbReference type="ChEBI" id="CHEBI:30616"/>
        <dbReference type="ChEBI" id="CHEBI:43474"/>
        <dbReference type="ChEBI" id="CHEBI:58443"/>
        <dbReference type="ChEBI" id="CHEBI:77657"/>
        <dbReference type="ChEBI" id="CHEBI:456216"/>
        <dbReference type="EC" id="6.3.2.6"/>
    </reaction>
</comment>
<comment type="pathway">
    <text evidence="1">Purine metabolism; IMP biosynthesis via de novo pathway; 5-amino-1-(5-phospho-D-ribosyl)imidazole-4-carboxamide from 5-amino-1-(5-phospho-D-ribosyl)imidazole-4-carboxylate: step 1/2.</text>
</comment>
<comment type="similarity">
    <text evidence="1">Belongs to the SAICAR synthetase family.</text>
</comment>
<organism>
    <name type="scientific">Pseudomonas putida (strain GB-1)</name>
    <dbReference type="NCBI Taxonomy" id="76869"/>
    <lineage>
        <taxon>Bacteria</taxon>
        <taxon>Pseudomonadati</taxon>
        <taxon>Pseudomonadota</taxon>
        <taxon>Gammaproteobacteria</taxon>
        <taxon>Pseudomonadales</taxon>
        <taxon>Pseudomonadaceae</taxon>
        <taxon>Pseudomonas</taxon>
    </lineage>
</organism>
<feature type="chain" id="PRO_1000076462" description="Phosphoribosylaminoimidazole-succinocarboxamide synthase">
    <location>
        <begin position="1"/>
        <end position="236"/>
    </location>
</feature>
<protein>
    <recommendedName>
        <fullName evidence="1">Phosphoribosylaminoimidazole-succinocarboxamide synthase</fullName>
        <ecNumber evidence="1">6.3.2.6</ecNumber>
    </recommendedName>
    <alternativeName>
        <fullName evidence="1">SAICAR synthetase</fullName>
    </alternativeName>
</protein>
<evidence type="ECO:0000255" key="1">
    <source>
        <dbReference type="HAMAP-Rule" id="MF_00137"/>
    </source>
</evidence>
<dbReference type="EC" id="6.3.2.6" evidence="1"/>
<dbReference type="EMBL" id="CP000926">
    <property type="protein sequence ID" value="ABZ00067.1"/>
    <property type="molecule type" value="Genomic_DNA"/>
</dbReference>
<dbReference type="RefSeq" id="WP_012273747.1">
    <property type="nucleotide sequence ID" value="NC_010322.1"/>
</dbReference>
<dbReference type="SMR" id="B0KSY0"/>
<dbReference type="KEGG" id="ppg:PputGB1_4178"/>
<dbReference type="eggNOG" id="COG0152">
    <property type="taxonomic scope" value="Bacteria"/>
</dbReference>
<dbReference type="HOGENOM" id="CLU_061495_2_0_6"/>
<dbReference type="UniPathway" id="UPA00074">
    <property type="reaction ID" value="UER00131"/>
</dbReference>
<dbReference type="Proteomes" id="UP000002157">
    <property type="component" value="Chromosome"/>
</dbReference>
<dbReference type="GO" id="GO:0005829">
    <property type="term" value="C:cytosol"/>
    <property type="evidence" value="ECO:0007669"/>
    <property type="project" value="TreeGrafter"/>
</dbReference>
<dbReference type="GO" id="GO:0005524">
    <property type="term" value="F:ATP binding"/>
    <property type="evidence" value="ECO:0007669"/>
    <property type="project" value="UniProtKB-KW"/>
</dbReference>
<dbReference type="GO" id="GO:0004639">
    <property type="term" value="F:phosphoribosylaminoimidazolesuccinocarboxamide synthase activity"/>
    <property type="evidence" value="ECO:0007669"/>
    <property type="project" value="UniProtKB-UniRule"/>
</dbReference>
<dbReference type="GO" id="GO:0006189">
    <property type="term" value="P:'de novo' IMP biosynthetic process"/>
    <property type="evidence" value="ECO:0007669"/>
    <property type="project" value="UniProtKB-UniRule"/>
</dbReference>
<dbReference type="GO" id="GO:0009236">
    <property type="term" value="P:cobalamin biosynthetic process"/>
    <property type="evidence" value="ECO:0007669"/>
    <property type="project" value="InterPro"/>
</dbReference>
<dbReference type="CDD" id="cd01415">
    <property type="entry name" value="SAICAR_synt_PurC"/>
    <property type="match status" value="1"/>
</dbReference>
<dbReference type="FunFam" id="3.30.200.20:FF:000086">
    <property type="entry name" value="Phosphoribosylaminoimidazole-succinocarboxamide synthase"/>
    <property type="match status" value="1"/>
</dbReference>
<dbReference type="FunFam" id="3.30.470.20:FF:000006">
    <property type="entry name" value="Phosphoribosylaminoimidazole-succinocarboxamide synthase"/>
    <property type="match status" value="1"/>
</dbReference>
<dbReference type="Gene3D" id="3.30.470.20">
    <property type="entry name" value="ATP-grasp fold, B domain"/>
    <property type="match status" value="1"/>
</dbReference>
<dbReference type="Gene3D" id="3.30.200.20">
    <property type="entry name" value="Phosphorylase Kinase, domain 1"/>
    <property type="match status" value="1"/>
</dbReference>
<dbReference type="HAMAP" id="MF_00137">
    <property type="entry name" value="SAICAR_synth"/>
    <property type="match status" value="1"/>
</dbReference>
<dbReference type="InterPro" id="IPR028923">
    <property type="entry name" value="SAICAR_synt/ADE2_N"/>
</dbReference>
<dbReference type="InterPro" id="IPR033934">
    <property type="entry name" value="SAICAR_synt_PurC"/>
</dbReference>
<dbReference type="InterPro" id="IPR001636">
    <property type="entry name" value="SAICAR_synth"/>
</dbReference>
<dbReference type="InterPro" id="IPR050089">
    <property type="entry name" value="SAICAR_synthetase"/>
</dbReference>
<dbReference type="InterPro" id="IPR018236">
    <property type="entry name" value="SAICAR_synthetase_CS"/>
</dbReference>
<dbReference type="NCBIfam" id="TIGR00081">
    <property type="entry name" value="purC"/>
    <property type="match status" value="1"/>
</dbReference>
<dbReference type="PANTHER" id="PTHR43599">
    <property type="entry name" value="MULTIFUNCTIONAL PROTEIN ADE2"/>
    <property type="match status" value="1"/>
</dbReference>
<dbReference type="PANTHER" id="PTHR43599:SF3">
    <property type="entry name" value="SI:DKEY-6E2.2"/>
    <property type="match status" value="1"/>
</dbReference>
<dbReference type="Pfam" id="PF01259">
    <property type="entry name" value="SAICAR_synt"/>
    <property type="match status" value="1"/>
</dbReference>
<dbReference type="SUPFAM" id="SSF56104">
    <property type="entry name" value="SAICAR synthase-like"/>
    <property type="match status" value="1"/>
</dbReference>
<dbReference type="PROSITE" id="PS01057">
    <property type="entry name" value="SAICAR_SYNTHETASE_1"/>
    <property type="match status" value="1"/>
</dbReference>
<dbReference type="PROSITE" id="PS01058">
    <property type="entry name" value="SAICAR_SYNTHETASE_2"/>
    <property type="match status" value="1"/>
</dbReference>
<gene>
    <name evidence="1" type="primary">purC</name>
    <name type="ordered locus">PputGB1_4178</name>
</gene>
<accession>B0KSY0</accession>
<proteinExistence type="inferred from homology"/>
<sequence>MEKRDELYRGKAKSVFKTDDADRLILLFRNDTSAFDGKRIEQLDRKGMVNNKFNAFIMQKLEEAGVPTQFDKLLGDNECLVKKLDMIPVECVVRNYAAGSLVKRLGVEEGIKLEPSTFELFLKNDEKGDPFINESHVVAFGWGTAEQLVEMKKLSLKVNEVLSKLFDDAGLLLVDFKLEFGVFHGQIVLGDEFSPDGCRLWDKETRKKMDKDRFRQGLGDVIEAYEEVAKRLGVPL</sequence>
<name>PUR7_PSEPG</name>
<keyword id="KW-0067">ATP-binding</keyword>
<keyword id="KW-0436">Ligase</keyword>
<keyword id="KW-0547">Nucleotide-binding</keyword>
<keyword id="KW-0658">Purine biosynthesis</keyword>